<sequence>MARVKRAVNAHKKRRVVLERASGYRGQRSRLYRKAKEQLLHSFNYNFRDRKARKGDFRKLWIQRINAAVRAEGITYNRFIQGLRLAGIELDRRALAEIAVSDPNTFKTIVDAAKAALPEDVNAPVEA</sequence>
<evidence type="ECO:0000255" key="1">
    <source>
        <dbReference type="HAMAP-Rule" id="MF_00382"/>
    </source>
</evidence>
<evidence type="ECO:0000305" key="2"/>
<proteinExistence type="inferred from homology"/>
<keyword id="KW-1185">Reference proteome</keyword>
<keyword id="KW-0687">Ribonucleoprotein</keyword>
<keyword id="KW-0689">Ribosomal protein</keyword>
<keyword id="KW-0694">RNA-binding</keyword>
<keyword id="KW-0699">rRNA-binding</keyword>
<organism>
    <name type="scientific">Bifidobacterium longum (strain NCC 2705)</name>
    <dbReference type="NCBI Taxonomy" id="206672"/>
    <lineage>
        <taxon>Bacteria</taxon>
        <taxon>Bacillati</taxon>
        <taxon>Actinomycetota</taxon>
        <taxon>Actinomycetes</taxon>
        <taxon>Bifidobacteriales</taxon>
        <taxon>Bifidobacteriaceae</taxon>
        <taxon>Bifidobacterium</taxon>
    </lineage>
</organism>
<feature type="chain" id="PRO_0000177123" description="Large ribosomal subunit protein bL20">
    <location>
        <begin position="1"/>
        <end position="127"/>
    </location>
</feature>
<dbReference type="EMBL" id="AE014295">
    <property type="protein sequence ID" value="AAN25168.1"/>
    <property type="molecule type" value="Genomic_DNA"/>
</dbReference>
<dbReference type="RefSeq" id="NP_696532.1">
    <property type="nucleotide sequence ID" value="NC_004307.2"/>
</dbReference>
<dbReference type="RefSeq" id="WP_011068013.1">
    <property type="nucleotide sequence ID" value="NC_004307.2"/>
</dbReference>
<dbReference type="SMR" id="Q8G4L1"/>
<dbReference type="STRING" id="206672.BL1367"/>
<dbReference type="EnsemblBacteria" id="AAN25168">
    <property type="protein sequence ID" value="AAN25168"/>
    <property type="gene ID" value="BL1367"/>
</dbReference>
<dbReference type="KEGG" id="blo:BL1367"/>
<dbReference type="PATRIC" id="fig|206672.9.peg.227"/>
<dbReference type="HOGENOM" id="CLU_123265_0_0_11"/>
<dbReference type="OrthoDB" id="9808966at2"/>
<dbReference type="PhylomeDB" id="Q8G4L1"/>
<dbReference type="Proteomes" id="UP000000439">
    <property type="component" value="Chromosome"/>
</dbReference>
<dbReference type="GO" id="GO:1990904">
    <property type="term" value="C:ribonucleoprotein complex"/>
    <property type="evidence" value="ECO:0007669"/>
    <property type="project" value="UniProtKB-KW"/>
</dbReference>
<dbReference type="GO" id="GO:0005840">
    <property type="term" value="C:ribosome"/>
    <property type="evidence" value="ECO:0007669"/>
    <property type="project" value="UniProtKB-KW"/>
</dbReference>
<dbReference type="GO" id="GO:0019843">
    <property type="term" value="F:rRNA binding"/>
    <property type="evidence" value="ECO:0007669"/>
    <property type="project" value="UniProtKB-UniRule"/>
</dbReference>
<dbReference type="GO" id="GO:0003735">
    <property type="term" value="F:structural constituent of ribosome"/>
    <property type="evidence" value="ECO:0007669"/>
    <property type="project" value="InterPro"/>
</dbReference>
<dbReference type="GO" id="GO:0000027">
    <property type="term" value="P:ribosomal large subunit assembly"/>
    <property type="evidence" value="ECO:0007669"/>
    <property type="project" value="UniProtKB-UniRule"/>
</dbReference>
<dbReference type="GO" id="GO:0006412">
    <property type="term" value="P:translation"/>
    <property type="evidence" value="ECO:0007669"/>
    <property type="project" value="InterPro"/>
</dbReference>
<dbReference type="CDD" id="cd07026">
    <property type="entry name" value="Ribosomal_L20"/>
    <property type="match status" value="1"/>
</dbReference>
<dbReference type="FunFam" id="1.10.1900.20:FF:000001">
    <property type="entry name" value="50S ribosomal protein L20"/>
    <property type="match status" value="1"/>
</dbReference>
<dbReference type="Gene3D" id="6.10.160.10">
    <property type="match status" value="1"/>
</dbReference>
<dbReference type="Gene3D" id="1.10.1900.20">
    <property type="entry name" value="Ribosomal protein L20"/>
    <property type="match status" value="1"/>
</dbReference>
<dbReference type="HAMAP" id="MF_00382">
    <property type="entry name" value="Ribosomal_bL20"/>
    <property type="match status" value="1"/>
</dbReference>
<dbReference type="InterPro" id="IPR005813">
    <property type="entry name" value="Ribosomal_bL20"/>
</dbReference>
<dbReference type="InterPro" id="IPR049946">
    <property type="entry name" value="RIBOSOMAL_L20_CS"/>
</dbReference>
<dbReference type="InterPro" id="IPR035566">
    <property type="entry name" value="Ribosomal_protein_bL20_C"/>
</dbReference>
<dbReference type="NCBIfam" id="TIGR01032">
    <property type="entry name" value="rplT_bact"/>
    <property type="match status" value="1"/>
</dbReference>
<dbReference type="PANTHER" id="PTHR10986">
    <property type="entry name" value="39S RIBOSOMAL PROTEIN L20"/>
    <property type="match status" value="1"/>
</dbReference>
<dbReference type="Pfam" id="PF00453">
    <property type="entry name" value="Ribosomal_L20"/>
    <property type="match status" value="1"/>
</dbReference>
<dbReference type="PRINTS" id="PR00062">
    <property type="entry name" value="RIBOSOMALL20"/>
</dbReference>
<dbReference type="SUPFAM" id="SSF74731">
    <property type="entry name" value="Ribosomal protein L20"/>
    <property type="match status" value="1"/>
</dbReference>
<dbReference type="PROSITE" id="PS00937">
    <property type="entry name" value="RIBOSOMAL_L20"/>
    <property type="match status" value="1"/>
</dbReference>
<comment type="function">
    <text evidence="1">Binds directly to 23S ribosomal RNA and is necessary for the in vitro assembly process of the 50S ribosomal subunit. It is not involved in the protein synthesizing functions of that subunit.</text>
</comment>
<comment type="similarity">
    <text evidence="1">Belongs to the bacterial ribosomal protein bL20 family.</text>
</comment>
<name>RL20_BIFLO</name>
<reference key="1">
    <citation type="journal article" date="2002" name="Proc. Natl. Acad. Sci. U.S.A.">
        <title>The genome sequence of Bifidobacterium longum reflects its adaptation to the human gastrointestinal tract.</title>
        <authorList>
            <person name="Schell M.A."/>
            <person name="Karmirantzou M."/>
            <person name="Snel B."/>
            <person name="Vilanova D."/>
            <person name="Berger B."/>
            <person name="Pessi G."/>
            <person name="Zwahlen M.-C."/>
            <person name="Desiere F."/>
            <person name="Bork P."/>
            <person name="Delley M."/>
            <person name="Pridmore R.D."/>
            <person name="Arigoni F."/>
        </authorList>
    </citation>
    <scope>NUCLEOTIDE SEQUENCE [LARGE SCALE GENOMIC DNA]</scope>
    <source>
        <strain>NCC 2705</strain>
    </source>
</reference>
<accession>Q8G4L1</accession>
<gene>
    <name evidence="1" type="primary">rplT</name>
    <name type="ordered locus">BL1367</name>
</gene>
<protein>
    <recommendedName>
        <fullName evidence="1">Large ribosomal subunit protein bL20</fullName>
    </recommendedName>
    <alternativeName>
        <fullName evidence="2">50S ribosomal protein L20</fullName>
    </alternativeName>
</protein>